<name>RSMJ_SHEB8</name>
<dbReference type="EC" id="2.1.1.242" evidence="1"/>
<dbReference type="EMBL" id="CP000753">
    <property type="protein sequence ID" value="ABS10357.1"/>
    <property type="molecule type" value="Genomic_DNA"/>
</dbReference>
<dbReference type="RefSeq" id="WP_012090596.1">
    <property type="nucleotide sequence ID" value="NC_009665.1"/>
</dbReference>
<dbReference type="SMR" id="A6WU68"/>
<dbReference type="KEGG" id="sbm:Shew185_4241"/>
<dbReference type="HOGENOM" id="CLU_076324_0_0_6"/>
<dbReference type="GO" id="GO:0005737">
    <property type="term" value="C:cytoplasm"/>
    <property type="evidence" value="ECO:0007669"/>
    <property type="project" value="UniProtKB-SubCell"/>
</dbReference>
<dbReference type="GO" id="GO:0008990">
    <property type="term" value="F:rRNA (guanine-N2-)-methyltransferase activity"/>
    <property type="evidence" value="ECO:0007669"/>
    <property type="project" value="UniProtKB-UniRule"/>
</dbReference>
<dbReference type="CDD" id="cd02440">
    <property type="entry name" value="AdoMet_MTases"/>
    <property type="match status" value="1"/>
</dbReference>
<dbReference type="Gene3D" id="3.40.50.150">
    <property type="entry name" value="Vaccinia Virus protein VP39"/>
    <property type="match status" value="1"/>
</dbReference>
<dbReference type="Gene3D" id="3.40.1630.10">
    <property type="entry name" value="YhiQ-like domain"/>
    <property type="match status" value="1"/>
</dbReference>
<dbReference type="HAMAP" id="MF_01523">
    <property type="entry name" value="16SrRNA_methyltr_J"/>
    <property type="match status" value="1"/>
</dbReference>
<dbReference type="InterPro" id="IPR007536">
    <property type="entry name" value="16SrRNA_methylTrfase_J"/>
</dbReference>
<dbReference type="InterPro" id="IPR029063">
    <property type="entry name" value="SAM-dependent_MTases_sf"/>
</dbReference>
<dbReference type="PANTHER" id="PTHR36112">
    <property type="entry name" value="RIBOSOMAL RNA SMALL SUBUNIT METHYLTRANSFERASE J"/>
    <property type="match status" value="1"/>
</dbReference>
<dbReference type="PANTHER" id="PTHR36112:SF1">
    <property type="entry name" value="RIBOSOMAL RNA SMALL SUBUNIT METHYLTRANSFERASE J"/>
    <property type="match status" value="1"/>
</dbReference>
<dbReference type="Pfam" id="PF04445">
    <property type="entry name" value="SAM_MT"/>
    <property type="match status" value="1"/>
</dbReference>
<dbReference type="SUPFAM" id="SSF53335">
    <property type="entry name" value="S-adenosyl-L-methionine-dependent methyltransferases"/>
    <property type="match status" value="1"/>
</dbReference>
<proteinExistence type="inferred from homology"/>
<accession>A6WU68</accession>
<gene>
    <name evidence="1" type="primary">rsmJ</name>
    <name type="ordered locus">Shew185_4241</name>
</gene>
<protein>
    <recommendedName>
        <fullName evidence="1">Ribosomal RNA small subunit methyltransferase J</fullName>
        <ecNumber evidence="1">2.1.1.242</ecNumber>
    </recommendedName>
    <alternativeName>
        <fullName evidence="1">16S rRNA m2G1516 methyltransferase</fullName>
    </alternativeName>
    <alternativeName>
        <fullName evidence="1">rRNA (guanine-N(2)-)-methyltransferase</fullName>
    </alternativeName>
</protein>
<sequence length="248" mass="27496">MTPIFFNQQYPTLVDICARWQLVYDANATFELRFESDTLSLHKRDEPKLDGIVVDFVTGAVAHRRKFGGGRGQSIAKAVGLKQGVMPSVVDGTAGLGRDAFVLASLGCTVTMVERHPVVAALLEDGLRRAYQDAEIGDWMRERMRLFHGSSLEALSKLAQEIDVVYLDPMYPHRDKSALVKKEMRVFQSLVGADLDADGLLAPALALATKRVVVKRPDYAEDLDGVKPNTVIETKKNRFDVYVKAAMK</sequence>
<comment type="function">
    <text evidence="1">Specifically methylates the guanosine in position 1516 of 16S rRNA.</text>
</comment>
<comment type="catalytic activity">
    <reaction evidence="1">
        <text>guanosine(1516) in 16S rRNA + S-adenosyl-L-methionine = N(2)-methylguanosine(1516) in 16S rRNA + S-adenosyl-L-homocysteine + H(+)</text>
        <dbReference type="Rhea" id="RHEA:43220"/>
        <dbReference type="Rhea" id="RHEA-COMP:10412"/>
        <dbReference type="Rhea" id="RHEA-COMP:10413"/>
        <dbReference type="ChEBI" id="CHEBI:15378"/>
        <dbReference type="ChEBI" id="CHEBI:57856"/>
        <dbReference type="ChEBI" id="CHEBI:59789"/>
        <dbReference type="ChEBI" id="CHEBI:74269"/>
        <dbReference type="ChEBI" id="CHEBI:74481"/>
        <dbReference type="EC" id="2.1.1.242"/>
    </reaction>
</comment>
<comment type="subcellular location">
    <subcellularLocation>
        <location evidence="1">Cytoplasm</location>
    </subcellularLocation>
</comment>
<comment type="similarity">
    <text evidence="1">Belongs to the methyltransferase superfamily. RsmJ family.</text>
</comment>
<evidence type="ECO:0000255" key="1">
    <source>
        <dbReference type="HAMAP-Rule" id="MF_01523"/>
    </source>
</evidence>
<keyword id="KW-0963">Cytoplasm</keyword>
<keyword id="KW-0489">Methyltransferase</keyword>
<keyword id="KW-0698">rRNA processing</keyword>
<keyword id="KW-0949">S-adenosyl-L-methionine</keyword>
<keyword id="KW-0808">Transferase</keyword>
<organism>
    <name type="scientific">Shewanella baltica (strain OS185)</name>
    <dbReference type="NCBI Taxonomy" id="402882"/>
    <lineage>
        <taxon>Bacteria</taxon>
        <taxon>Pseudomonadati</taxon>
        <taxon>Pseudomonadota</taxon>
        <taxon>Gammaproteobacteria</taxon>
        <taxon>Alteromonadales</taxon>
        <taxon>Shewanellaceae</taxon>
        <taxon>Shewanella</taxon>
    </lineage>
</organism>
<reference key="1">
    <citation type="submission" date="2007-07" db="EMBL/GenBank/DDBJ databases">
        <title>Complete sequence of chromosome of Shewanella baltica OS185.</title>
        <authorList>
            <consortium name="US DOE Joint Genome Institute"/>
            <person name="Copeland A."/>
            <person name="Lucas S."/>
            <person name="Lapidus A."/>
            <person name="Barry K."/>
            <person name="Glavina del Rio T."/>
            <person name="Dalin E."/>
            <person name="Tice H."/>
            <person name="Pitluck S."/>
            <person name="Sims D."/>
            <person name="Brettin T."/>
            <person name="Bruce D."/>
            <person name="Detter J.C."/>
            <person name="Han C."/>
            <person name="Schmutz J."/>
            <person name="Larimer F."/>
            <person name="Land M."/>
            <person name="Hauser L."/>
            <person name="Kyrpides N."/>
            <person name="Mikhailova N."/>
            <person name="Brettar I."/>
            <person name="Rodrigues J."/>
            <person name="Konstantinidis K."/>
            <person name="Tiedje J."/>
            <person name="Richardson P."/>
        </authorList>
    </citation>
    <scope>NUCLEOTIDE SEQUENCE [LARGE SCALE GENOMIC DNA]</scope>
    <source>
        <strain>OS185</strain>
    </source>
</reference>
<feature type="chain" id="PRO_0000316262" description="Ribosomal RNA small subunit methyltransferase J">
    <location>
        <begin position="1"/>
        <end position="248"/>
    </location>
</feature>
<feature type="binding site" evidence="1">
    <location>
        <begin position="98"/>
        <end position="99"/>
    </location>
    <ligand>
        <name>S-adenosyl-L-methionine</name>
        <dbReference type="ChEBI" id="CHEBI:59789"/>
    </ligand>
</feature>
<feature type="binding site" evidence="1">
    <location>
        <begin position="114"/>
        <end position="115"/>
    </location>
    <ligand>
        <name>S-adenosyl-L-methionine</name>
        <dbReference type="ChEBI" id="CHEBI:59789"/>
    </ligand>
</feature>
<feature type="binding site" evidence="1">
    <location>
        <begin position="150"/>
        <end position="151"/>
    </location>
    <ligand>
        <name>S-adenosyl-L-methionine</name>
        <dbReference type="ChEBI" id="CHEBI:59789"/>
    </ligand>
</feature>
<feature type="binding site" evidence="1">
    <location>
        <position position="168"/>
    </location>
    <ligand>
        <name>S-adenosyl-L-methionine</name>
        <dbReference type="ChEBI" id="CHEBI:59789"/>
    </ligand>
</feature>